<gene>
    <name type="primary">enp2</name>
    <name type="ORF">SPCC330.09</name>
</gene>
<organism>
    <name type="scientific">Schizosaccharomyces pombe (strain 972 / ATCC 24843)</name>
    <name type="common">Fission yeast</name>
    <dbReference type="NCBI Taxonomy" id="284812"/>
    <lineage>
        <taxon>Eukaryota</taxon>
        <taxon>Fungi</taxon>
        <taxon>Dikarya</taxon>
        <taxon>Ascomycota</taxon>
        <taxon>Taphrinomycotina</taxon>
        <taxon>Schizosaccharomycetes</taxon>
        <taxon>Schizosaccharomycetales</taxon>
        <taxon>Schizosaccharomycetaceae</taxon>
        <taxon>Schizosaccharomyces</taxon>
    </lineage>
</organism>
<name>NOL10_SCHPO</name>
<protein>
    <recommendedName>
        <fullName>Ribosome biogenesis protein enp2 homolog</fullName>
    </recommendedName>
</protein>
<accession>O74879</accession>
<feature type="chain" id="PRO_0000337683" description="Ribosome biogenesis protein enp2 homolog">
    <location>
        <begin position="1"/>
        <end position="634"/>
    </location>
</feature>
<feature type="repeat" description="WD 1">
    <location>
        <begin position="51"/>
        <end position="91"/>
    </location>
</feature>
<feature type="repeat" description="WD 2">
    <location>
        <begin position="182"/>
        <end position="221"/>
    </location>
</feature>
<feature type="repeat" description="WD 3">
    <location>
        <begin position="235"/>
        <end position="274"/>
    </location>
</feature>
<feature type="repeat" description="WD 4">
    <location>
        <begin position="278"/>
        <end position="320"/>
    </location>
</feature>
<feature type="region of interest" description="Disordered" evidence="2">
    <location>
        <begin position="513"/>
        <end position="634"/>
    </location>
</feature>
<feature type="compositionally biased region" description="Basic and acidic residues" evidence="2">
    <location>
        <begin position="513"/>
        <end position="522"/>
    </location>
</feature>
<feature type="compositionally biased region" description="Acidic residues" evidence="2">
    <location>
        <begin position="546"/>
        <end position="559"/>
    </location>
</feature>
<feature type="compositionally biased region" description="Polar residues" evidence="2">
    <location>
        <begin position="571"/>
        <end position="588"/>
    </location>
</feature>
<feature type="compositionally biased region" description="Polar residues" evidence="2">
    <location>
        <begin position="619"/>
        <end position="634"/>
    </location>
</feature>
<feature type="modified residue" description="Phosphoserine" evidence="4">
    <location>
        <position position="531"/>
    </location>
</feature>
<dbReference type="EMBL" id="CU329672">
    <property type="protein sequence ID" value="CAA20914.1"/>
    <property type="molecule type" value="Genomic_DNA"/>
</dbReference>
<dbReference type="PIR" id="T41319">
    <property type="entry name" value="T41319"/>
</dbReference>
<dbReference type="RefSeq" id="NP_587709.1">
    <property type="nucleotide sequence ID" value="NM_001022704.2"/>
</dbReference>
<dbReference type="SMR" id="O74879"/>
<dbReference type="BioGRID" id="275571">
    <property type="interactions" value="4"/>
</dbReference>
<dbReference type="FunCoup" id="O74879">
    <property type="interactions" value="865"/>
</dbReference>
<dbReference type="IntAct" id="O74879">
    <property type="interactions" value="1"/>
</dbReference>
<dbReference type="MINT" id="O74879"/>
<dbReference type="STRING" id="284812.O74879"/>
<dbReference type="iPTMnet" id="O74879"/>
<dbReference type="PaxDb" id="4896-SPCC330.09.1"/>
<dbReference type="EnsemblFungi" id="SPCC330.09.1">
    <property type="protein sequence ID" value="SPCC330.09.1:pep"/>
    <property type="gene ID" value="SPCC330.09"/>
</dbReference>
<dbReference type="GeneID" id="2538997"/>
<dbReference type="KEGG" id="spo:2538997"/>
<dbReference type="PomBase" id="SPCC330.09">
    <property type="gene designation" value="enp2"/>
</dbReference>
<dbReference type="VEuPathDB" id="FungiDB:SPCC330.09"/>
<dbReference type="eggNOG" id="KOG2321">
    <property type="taxonomic scope" value="Eukaryota"/>
</dbReference>
<dbReference type="HOGENOM" id="CLU_009923_0_0_1"/>
<dbReference type="InParanoid" id="O74879"/>
<dbReference type="OMA" id="GYFMDVR"/>
<dbReference type="PhylomeDB" id="O74879"/>
<dbReference type="PRO" id="PR:O74879"/>
<dbReference type="Proteomes" id="UP000002485">
    <property type="component" value="Chromosome III"/>
</dbReference>
<dbReference type="GO" id="GO:0030686">
    <property type="term" value="C:90S preribosome"/>
    <property type="evidence" value="ECO:0000266"/>
    <property type="project" value="PomBase"/>
</dbReference>
<dbReference type="GO" id="GO:0005829">
    <property type="term" value="C:cytosol"/>
    <property type="evidence" value="ECO:0007005"/>
    <property type="project" value="PomBase"/>
</dbReference>
<dbReference type="GO" id="GO:0005730">
    <property type="term" value="C:nucleolus"/>
    <property type="evidence" value="ECO:0000318"/>
    <property type="project" value="GO_Central"/>
</dbReference>
<dbReference type="GO" id="GO:0005634">
    <property type="term" value="C:nucleus"/>
    <property type="evidence" value="ECO:0007005"/>
    <property type="project" value="PomBase"/>
</dbReference>
<dbReference type="GO" id="GO:0032040">
    <property type="term" value="C:small-subunit processome"/>
    <property type="evidence" value="ECO:0000318"/>
    <property type="project" value="GO_Central"/>
</dbReference>
<dbReference type="GO" id="GO:0000462">
    <property type="term" value="P:maturation of SSU-rRNA from tricistronic rRNA transcript (SSU-rRNA, 5.8S rRNA, LSU-rRNA)"/>
    <property type="evidence" value="ECO:0000318"/>
    <property type="project" value="GO_Central"/>
</dbReference>
<dbReference type="FunFam" id="2.130.10.10:FF:000537">
    <property type="entry name" value="Ribosome biogenesis protein ENP2"/>
    <property type="match status" value="1"/>
</dbReference>
<dbReference type="Gene3D" id="2.130.10.10">
    <property type="entry name" value="YVTN repeat-like/Quinoprotein amine dehydrogenase"/>
    <property type="match status" value="1"/>
</dbReference>
<dbReference type="InterPro" id="IPR056551">
    <property type="entry name" value="Beta-prop_NOL10_N"/>
</dbReference>
<dbReference type="InterPro" id="IPR040382">
    <property type="entry name" value="NOL10/Enp2"/>
</dbReference>
<dbReference type="InterPro" id="IPR056550">
    <property type="entry name" value="NOL10_2nd"/>
</dbReference>
<dbReference type="InterPro" id="IPR012580">
    <property type="entry name" value="NUC153"/>
</dbReference>
<dbReference type="InterPro" id="IPR015943">
    <property type="entry name" value="WD40/YVTN_repeat-like_dom_sf"/>
</dbReference>
<dbReference type="InterPro" id="IPR036322">
    <property type="entry name" value="WD40_repeat_dom_sf"/>
</dbReference>
<dbReference type="InterPro" id="IPR001680">
    <property type="entry name" value="WD40_rpt"/>
</dbReference>
<dbReference type="PANTHER" id="PTHR14927">
    <property type="entry name" value="NUCLEOLAR PROTEIN 10"/>
    <property type="match status" value="1"/>
</dbReference>
<dbReference type="PANTHER" id="PTHR14927:SF0">
    <property type="entry name" value="NUCLEOLAR PROTEIN 10"/>
    <property type="match status" value="1"/>
</dbReference>
<dbReference type="Pfam" id="PF23098">
    <property type="entry name" value="Beta-prop_NOL10_N"/>
    <property type="match status" value="1"/>
</dbReference>
<dbReference type="Pfam" id="PF23097">
    <property type="entry name" value="NOL10_2nd"/>
    <property type="match status" value="1"/>
</dbReference>
<dbReference type="Pfam" id="PF08159">
    <property type="entry name" value="NUC153"/>
    <property type="match status" value="1"/>
</dbReference>
<dbReference type="SMART" id="SM00320">
    <property type="entry name" value="WD40"/>
    <property type="match status" value="2"/>
</dbReference>
<dbReference type="SUPFAM" id="SSF50978">
    <property type="entry name" value="WD40 repeat-like"/>
    <property type="match status" value="1"/>
</dbReference>
<dbReference type="PROSITE" id="PS50294">
    <property type="entry name" value="WD_REPEATS_REGION"/>
    <property type="match status" value="1"/>
</dbReference>
<reference key="1">
    <citation type="journal article" date="2002" name="Nature">
        <title>The genome sequence of Schizosaccharomyces pombe.</title>
        <authorList>
            <person name="Wood V."/>
            <person name="Gwilliam R."/>
            <person name="Rajandream M.A."/>
            <person name="Lyne M.H."/>
            <person name="Lyne R."/>
            <person name="Stewart A."/>
            <person name="Sgouros J.G."/>
            <person name="Peat N."/>
            <person name="Hayles J."/>
            <person name="Baker S.G."/>
            <person name="Basham D."/>
            <person name="Bowman S."/>
            <person name="Brooks K."/>
            <person name="Brown D."/>
            <person name="Brown S."/>
            <person name="Chillingworth T."/>
            <person name="Churcher C.M."/>
            <person name="Collins M."/>
            <person name="Connor R."/>
            <person name="Cronin A."/>
            <person name="Davis P."/>
            <person name="Feltwell T."/>
            <person name="Fraser A."/>
            <person name="Gentles S."/>
            <person name="Goble A."/>
            <person name="Hamlin N."/>
            <person name="Harris D.E."/>
            <person name="Hidalgo J."/>
            <person name="Hodgson G."/>
            <person name="Holroyd S."/>
            <person name="Hornsby T."/>
            <person name="Howarth S."/>
            <person name="Huckle E.J."/>
            <person name="Hunt S."/>
            <person name="Jagels K."/>
            <person name="James K.D."/>
            <person name="Jones L."/>
            <person name="Jones M."/>
            <person name="Leather S."/>
            <person name="McDonald S."/>
            <person name="McLean J."/>
            <person name="Mooney P."/>
            <person name="Moule S."/>
            <person name="Mungall K.L."/>
            <person name="Murphy L.D."/>
            <person name="Niblett D."/>
            <person name="Odell C."/>
            <person name="Oliver K."/>
            <person name="O'Neil S."/>
            <person name="Pearson D."/>
            <person name="Quail M.A."/>
            <person name="Rabbinowitsch E."/>
            <person name="Rutherford K.M."/>
            <person name="Rutter S."/>
            <person name="Saunders D."/>
            <person name="Seeger K."/>
            <person name="Sharp S."/>
            <person name="Skelton J."/>
            <person name="Simmonds M.N."/>
            <person name="Squares R."/>
            <person name="Squares S."/>
            <person name="Stevens K."/>
            <person name="Taylor K."/>
            <person name="Taylor R.G."/>
            <person name="Tivey A."/>
            <person name="Walsh S.V."/>
            <person name="Warren T."/>
            <person name="Whitehead S."/>
            <person name="Woodward J.R."/>
            <person name="Volckaert G."/>
            <person name="Aert R."/>
            <person name="Robben J."/>
            <person name="Grymonprez B."/>
            <person name="Weltjens I."/>
            <person name="Vanstreels E."/>
            <person name="Rieger M."/>
            <person name="Schaefer M."/>
            <person name="Mueller-Auer S."/>
            <person name="Gabel C."/>
            <person name="Fuchs M."/>
            <person name="Duesterhoeft A."/>
            <person name="Fritzc C."/>
            <person name="Holzer E."/>
            <person name="Moestl D."/>
            <person name="Hilbert H."/>
            <person name="Borzym K."/>
            <person name="Langer I."/>
            <person name="Beck A."/>
            <person name="Lehrach H."/>
            <person name="Reinhardt R."/>
            <person name="Pohl T.M."/>
            <person name="Eger P."/>
            <person name="Zimmermann W."/>
            <person name="Wedler H."/>
            <person name="Wambutt R."/>
            <person name="Purnelle B."/>
            <person name="Goffeau A."/>
            <person name="Cadieu E."/>
            <person name="Dreano S."/>
            <person name="Gloux S."/>
            <person name="Lelaure V."/>
            <person name="Mottier S."/>
            <person name="Galibert F."/>
            <person name="Aves S.J."/>
            <person name="Xiang Z."/>
            <person name="Hunt C."/>
            <person name="Moore K."/>
            <person name="Hurst S.M."/>
            <person name="Lucas M."/>
            <person name="Rochet M."/>
            <person name="Gaillardin C."/>
            <person name="Tallada V.A."/>
            <person name="Garzon A."/>
            <person name="Thode G."/>
            <person name="Daga R.R."/>
            <person name="Cruzado L."/>
            <person name="Jimenez J."/>
            <person name="Sanchez M."/>
            <person name="del Rey F."/>
            <person name="Benito J."/>
            <person name="Dominguez A."/>
            <person name="Revuelta J.L."/>
            <person name="Moreno S."/>
            <person name="Armstrong J."/>
            <person name="Forsburg S.L."/>
            <person name="Cerutti L."/>
            <person name="Lowe T."/>
            <person name="McCombie W.R."/>
            <person name="Paulsen I."/>
            <person name="Potashkin J."/>
            <person name="Shpakovski G.V."/>
            <person name="Ussery D."/>
            <person name="Barrell B.G."/>
            <person name="Nurse P."/>
        </authorList>
    </citation>
    <scope>NUCLEOTIDE SEQUENCE [LARGE SCALE GENOMIC DNA]</scope>
    <source>
        <strain>972 / ATCC 24843</strain>
    </source>
</reference>
<reference key="2">
    <citation type="journal article" date="2006" name="Nat. Biotechnol.">
        <title>ORFeome cloning and global analysis of protein localization in the fission yeast Schizosaccharomyces pombe.</title>
        <authorList>
            <person name="Matsuyama A."/>
            <person name="Arai R."/>
            <person name="Yashiroda Y."/>
            <person name="Shirai A."/>
            <person name="Kamata A."/>
            <person name="Sekido S."/>
            <person name="Kobayashi Y."/>
            <person name="Hashimoto A."/>
            <person name="Hamamoto M."/>
            <person name="Hiraoka Y."/>
            <person name="Horinouchi S."/>
            <person name="Yoshida M."/>
        </authorList>
    </citation>
    <scope>SUBCELLULAR LOCATION [LARGE SCALE ANALYSIS]</scope>
</reference>
<reference key="3">
    <citation type="journal article" date="2008" name="J. Proteome Res.">
        <title>Phosphoproteome analysis of fission yeast.</title>
        <authorList>
            <person name="Wilson-Grady J.T."/>
            <person name="Villen J."/>
            <person name="Gygi S.P."/>
        </authorList>
    </citation>
    <scope>PHOSPHORYLATION [LARGE SCALE ANALYSIS] AT SER-531</scope>
    <scope>IDENTIFICATION BY MASS SPECTROMETRY</scope>
</reference>
<comment type="function">
    <text evidence="1">May be involved in rRNA-processing and ribosome biosynthesis.</text>
</comment>
<comment type="subunit">
    <text evidence="1">Component of the 90S pre-ribosomes.</text>
</comment>
<comment type="subcellular location">
    <subcellularLocation>
        <location evidence="3">Nucleus</location>
        <location evidence="3">Nucleolus</location>
    </subcellularLocation>
</comment>
<comment type="similarity">
    <text evidence="5">Belongs to the WD repeat NOL10/ENP2 family.</text>
</comment>
<evidence type="ECO:0000250" key="1"/>
<evidence type="ECO:0000256" key="2">
    <source>
        <dbReference type="SAM" id="MobiDB-lite"/>
    </source>
</evidence>
<evidence type="ECO:0000269" key="3">
    <source>
    </source>
</evidence>
<evidence type="ECO:0000269" key="4">
    <source>
    </source>
</evidence>
<evidence type="ECO:0000305" key="5"/>
<proteinExistence type="evidence at protein level"/>
<sequence>MSLKVQNPNNVRVYTVSGEGVTQRLPNWISKRKLKKDYALSHRIELLQDFEYPEASNRIKCTRDGKYAMATGVYKPHIKVFDFAEMSLKFERHTDAENVQFEILSDDWTKSVHLQTDRTVDFHSQGGIHYSTRIPKYGRDLKYHYPNCDLYLAAAGDEVYRLNLEQGRFLNPLKIESAQIDSPTGGVNVIDINPMHQLLAFGTDAGSVEFWDPRDRSRVGILEIPSTVPSTPYSDNSRSVTALKYRNDGLNVAIGLSDGATLLYDLRSSSPYMSKDQGYSMPIKSLHWMDSALDGTARVLSADSKIIKIWEKDTGKPFSSIEPTVELNDVCPIEGTGLILTANEGSPMHAFYIPSLNPAPRWCSFLDNITEEMEENPAPTIYDDYKFVTKKELLNLGLDHLVGTGVIRAYMHGFFIDNNLYEKARLIANPFSYEEHRQKIVKERLEKQRASKIRSQNRPKVNAGLASRLSYQENKLRKKTGVTDGPSILEDERFKNVFTDKEFEVDEDTLEYKQLHPSRSEARGLTAAEESEEEKEHTKGIKFSSDEESLSDMEEENETFDALVDRRKTEQQVSNEKTPQETIRSTPSGMEMTFKVEKKKKSKPVNRDEDSTSGKKKQVTQGRRSASKNVFRNM</sequence>
<keyword id="KW-0539">Nucleus</keyword>
<keyword id="KW-0597">Phosphoprotein</keyword>
<keyword id="KW-1185">Reference proteome</keyword>
<keyword id="KW-0677">Repeat</keyword>
<keyword id="KW-0690">Ribosome biogenesis</keyword>
<keyword id="KW-0698">rRNA processing</keyword>
<keyword id="KW-0853">WD repeat</keyword>